<feature type="initiator methionine" description="Removed" evidence="1">
    <location>
        <position position="1"/>
    </location>
</feature>
<feature type="chain" id="PRO_0000167794" description="ESAT-6-like protein EsxB">
    <location>
        <begin position="2"/>
        <end position="100"/>
    </location>
</feature>
<feature type="region of interest" description="Disordered" evidence="4">
    <location>
        <begin position="81"/>
        <end position="100"/>
    </location>
</feature>
<feature type="coiled-coil region" evidence="3">
    <location>
        <begin position="49"/>
        <end position="86"/>
    </location>
</feature>
<feature type="compositionally biased region" description="Polar residues" evidence="4">
    <location>
        <begin position="91"/>
        <end position="100"/>
    </location>
</feature>
<organism>
    <name type="scientific">Mycobacterium bovis (strain ATCC BAA-935 / AF2122/97)</name>
    <dbReference type="NCBI Taxonomy" id="233413"/>
    <lineage>
        <taxon>Bacteria</taxon>
        <taxon>Bacillati</taxon>
        <taxon>Actinomycetota</taxon>
        <taxon>Actinomycetes</taxon>
        <taxon>Mycobacteriales</taxon>
        <taxon>Mycobacteriaceae</taxon>
        <taxon>Mycobacterium</taxon>
        <taxon>Mycobacterium tuberculosis complex</taxon>
    </lineage>
</organism>
<evidence type="ECO:0000250" key="1"/>
<evidence type="ECO:0000250" key="2">
    <source>
        <dbReference type="UniProtKB" id="P9WNK5"/>
    </source>
</evidence>
<evidence type="ECO:0000255" key="3"/>
<evidence type="ECO:0000256" key="4">
    <source>
        <dbReference type="SAM" id="MobiDB-lite"/>
    </source>
</evidence>
<evidence type="ECO:0000305" key="5"/>
<accession>P0A567</accession>
<accession>A0A1R3Y5R0</accession>
<accession>O69739</accession>
<accession>X2BQ42</accession>
<sequence length="100" mass="10794">MAEMKTDAATLAQEAGNFERISGDLKTQIDQVESTAGSLQGQWRGAAGTAAQAAVVRFQEAANKQKQELDEISTNIRQAGVQYSRADEEQQQALSSQMGF</sequence>
<proteinExistence type="inferred from homology"/>
<dbReference type="EMBL" id="LT708304">
    <property type="protein sequence ID" value="SIU02536.1"/>
    <property type="molecule type" value="Genomic_DNA"/>
</dbReference>
<dbReference type="RefSeq" id="NP_857541.1">
    <property type="nucleotide sequence ID" value="NC_002945.3"/>
</dbReference>
<dbReference type="RefSeq" id="WP_003399940.1">
    <property type="nucleotide sequence ID" value="NC_002945.4"/>
</dbReference>
<dbReference type="BMRB" id="P0A567"/>
<dbReference type="SMR" id="P0A567"/>
<dbReference type="GeneID" id="45427878"/>
<dbReference type="KEGG" id="mbo:BQ2027_MB3904"/>
<dbReference type="PATRIC" id="fig|233413.5.peg.4277"/>
<dbReference type="EvolutionaryTrace" id="P0A567"/>
<dbReference type="Proteomes" id="UP000001419">
    <property type="component" value="Chromosome"/>
</dbReference>
<dbReference type="GO" id="GO:0005576">
    <property type="term" value="C:extracellular region"/>
    <property type="evidence" value="ECO:0007669"/>
    <property type="project" value="UniProtKB-SubCell"/>
</dbReference>
<dbReference type="FunFam" id="1.10.287.1060:FF:000008">
    <property type="entry name" value="ESAT-6-like protein"/>
    <property type="match status" value="1"/>
</dbReference>
<dbReference type="Gene3D" id="1.10.287.1060">
    <property type="entry name" value="ESAT-6-like"/>
    <property type="match status" value="1"/>
</dbReference>
<dbReference type="InterPro" id="IPR036689">
    <property type="entry name" value="ESAT-6-like_sf"/>
</dbReference>
<dbReference type="InterPro" id="IPR010310">
    <property type="entry name" value="T7SS_ESAT-6-like"/>
</dbReference>
<dbReference type="NCBIfam" id="TIGR03930">
    <property type="entry name" value="WXG100_ESAT6"/>
    <property type="match status" value="1"/>
</dbReference>
<dbReference type="Pfam" id="PF06013">
    <property type="entry name" value="WXG100"/>
    <property type="match status" value="1"/>
</dbReference>
<dbReference type="SUPFAM" id="SSF140453">
    <property type="entry name" value="EsxAB dimer-like"/>
    <property type="match status" value="1"/>
</dbReference>
<reference key="1">
    <citation type="journal article" date="2003" name="Proc. Natl. Acad. Sci. U.S.A.">
        <title>The complete genome sequence of Mycobacterium bovis.</title>
        <authorList>
            <person name="Garnier T."/>
            <person name="Eiglmeier K."/>
            <person name="Camus J.-C."/>
            <person name="Medina N."/>
            <person name="Mansoor H."/>
            <person name="Pryor M."/>
            <person name="Duthoy S."/>
            <person name="Grondin S."/>
            <person name="Lacroix C."/>
            <person name="Monsempe C."/>
            <person name="Simon S."/>
            <person name="Harris B."/>
            <person name="Atkin R."/>
            <person name="Doggett J."/>
            <person name="Mayes R."/>
            <person name="Keating L."/>
            <person name="Wheeler P.R."/>
            <person name="Parkhill J."/>
            <person name="Barrell B.G."/>
            <person name="Cole S.T."/>
            <person name="Gordon S.V."/>
            <person name="Hewinson R.G."/>
        </authorList>
    </citation>
    <scope>NUCLEOTIDE SEQUENCE [LARGE SCALE GENOMIC DNA]</scope>
    <source>
        <strain>ATCC BAA-935 / AF2122/97</strain>
    </source>
</reference>
<reference key="2">
    <citation type="journal article" date="2017" name="Genome Announc.">
        <title>Updated reference genome sequence and annotation of Mycobacterium bovis AF2122/97.</title>
        <authorList>
            <person name="Malone K.M."/>
            <person name="Farrell D."/>
            <person name="Stuber T.P."/>
            <person name="Schubert O.T."/>
            <person name="Aebersold R."/>
            <person name="Robbe-Austerman S."/>
            <person name="Gordon S.V."/>
        </authorList>
    </citation>
    <scope>NUCLEOTIDE SEQUENCE [LARGE SCALE GENOMIC DNA]</scope>
    <scope>GENOME REANNOTATION</scope>
    <source>
        <strain>ATCC BAA-935 / AF2122/97</strain>
    </source>
</reference>
<comment type="function">
    <text evidence="2">A secreted protein. Acts as a strong host T-cell antigen. Involved in translocation of bacteria from the host (human) phagolysosome to the host cytoplasm. Might serve as a chaperone to prevent uncontrolled membrane lysis by its partner EsxA.</text>
</comment>
<comment type="subunit">
    <text evidence="2">Forms a tight 1:1 complex with EsxA (ESAT-6).</text>
</comment>
<comment type="subcellular location">
    <subcellularLocation>
        <location evidence="2">Secreted</location>
    </subcellularLocation>
    <text evidence="2">Probably secreted via the ESX-1 / type VII secretion system (T7SS).</text>
</comment>
<comment type="similarity">
    <text evidence="5">Belongs to the WXG100 family. CFP-10 subfamily.</text>
</comment>
<gene>
    <name type="primary">esxB</name>
    <name type="synonym">cfp10</name>
    <name type="synonym">lhp</name>
    <name type="synonym">mtsA10</name>
    <name type="ordered locus">BQ2027_MB3904</name>
</gene>
<keyword id="KW-0143">Chaperone</keyword>
<keyword id="KW-0175">Coiled coil</keyword>
<keyword id="KW-1185">Reference proteome</keyword>
<keyword id="KW-0964">Secreted</keyword>
<keyword id="KW-0843">Virulence</keyword>
<protein>
    <recommendedName>
        <fullName>ESAT-6-like protein EsxB</fullName>
    </recommendedName>
    <alternativeName>
        <fullName>10 kDa culture filtrate antigen CFP-10</fullName>
    </alternativeName>
    <alternativeName>
        <fullName>Secreted antigenic protein MTSA-10</fullName>
    </alternativeName>
</protein>
<name>ESXB_MYCBO</name>